<reference key="1">
    <citation type="journal article" date="2005" name="Nat. Biotechnol.">
        <title>Genome sequence of the chlorinated compound-respiring bacterium Dehalococcoides species strain CBDB1.</title>
        <authorList>
            <person name="Kube M."/>
            <person name="Beck A."/>
            <person name="Zinder S.H."/>
            <person name="Kuhl H."/>
            <person name="Reinhardt R."/>
            <person name="Adrian L."/>
        </authorList>
    </citation>
    <scope>NUCLEOTIDE SEQUENCE [LARGE SCALE GENOMIC DNA]</scope>
    <source>
        <strain>CBDB1</strain>
    </source>
</reference>
<evidence type="ECO:0000255" key="1">
    <source>
        <dbReference type="HAMAP-Rule" id="MF_00075"/>
    </source>
</evidence>
<name>IF1_DEHMC</name>
<accession>Q3ZZQ1</accession>
<gene>
    <name evidence="1" type="primary">infA</name>
    <name type="ordered locus">cbdbA461</name>
</gene>
<protein>
    <recommendedName>
        <fullName evidence="1">Translation initiation factor IF-1</fullName>
    </recommendedName>
</protein>
<sequence length="73" mass="8248">MPKKDAIEVEATVLEALPSAAFRVQLSNGHEVLAHISGKMRVHYIRILPGDRVLVELSPYDLTRGRVTYRFKS</sequence>
<feature type="chain" id="PRO_0000263794" description="Translation initiation factor IF-1">
    <location>
        <begin position="1"/>
        <end position="73"/>
    </location>
</feature>
<feature type="domain" description="S1-like" evidence="1">
    <location>
        <begin position="1"/>
        <end position="72"/>
    </location>
</feature>
<comment type="function">
    <text evidence="1">One of the essential components for the initiation of protein synthesis. Stabilizes the binding of IF-2 and IF-3 on the 30S subunit to which N-formylmethionyl-tRNA(fMet) subsequently binds. Helps modulate mRNA selection, yielding the 30S pre-initiation complex (PIC). Upon addition of the 50S ribosomal subunit IF-1, IF-2 and IF-3 are released leaving the mature 70S translation initiation complex.</text>
</comment>
<comment type="subunit">
    <text evidence="1">Component of the 30S ribosomal translation pre-initiation complex which assembles on the 30S ribosome in the order IF-2 and IF-3, IF-1 and N-formylmethionyl-tRNA(fMet); mRNA recruitment can occur at any time during PIC assembly.</text>
</comment>
<comment type="subcellular location">
    <subcellularLocation>
        <location evidence="1">Cytoplasm</location>
    </subcellularLocation>
</comment>
<comment type="similarity">
    <text evidence="1">Belongs to the IF-1 family.</text>
</comment>
<proteinExistence type="inferred from homology"/>
<dbReference type="EMBL" id="AJ965256">
    <property type="protein sequence ID" value="CAI82662.1"/>
    <property type="molecule type" value="Genomic_DNA"/>
</dbReference>
<dbReference type="RefSeq" id="WP_010936274.1">
    <property type="nucleotide sequence ID" value="NC_007356.1"/>
</dbReference>
<dbReference type="SMR" id="Q3ZZQ1"/>
<dbReference type="GeneID" id="3230225"/>
<dbReference type="KEGG" id="deh:cbdbA461"/>
<dbReference type="HOGENOM" id="CLU_151267_1_0_0"/>
<dbReference type="Proteomes" id="UP000000433">
    <property type="component" value="Chromosome"/>
</dbReference>
<dbReference type="GO" id="GO:0005829">
    <property type="term" value="C:cytosol"/>
    <property type="evidence" value="ECO:0007669"/>
    <property type="project" value="TreeGrafter"/>
</dbReference>
<dbReference type="GO" id="GO:0043022">
    <property type="term" value="F:ribosome binding"/>
    <property type="evidence" value="ECO:0007669"/>
    <property type="project" value="UniProtKB-UniRule"/>
</dbReference>
<dbReference type="GO" id="GO:0019843">
    <property type="term" value="F:rRNA binding"/>
    <property type="evidence" value="ECO:0007669"/>
    <property type="project" value="UniProtKB-UniRule"/>
</dbReference>
<dbReference type="GO" id="GO:0003743">
    <property type="term" value="F:translation initiation factor activity"/>
    <property type="evidence" value="ECO:0007669"/>
    <property type="project" value="UniProtKB-UniRule"/>
</dbReference>
<dbReference type="CDD" id="cd04451">
    <property type="entry name" value="S1_IF1"/>
    <property type="match status" value="1"/>
</dbReference>
<dbReference type="FunFam" id="2.40.50.140:FF:000002">
    <property type="entry name" value="Translation initiation factor IF-1"/>
    <property type="match status" value="1"/>
</dbReference>
<dbReference type="Gene3D" id="2.40.50.140">
    <property type="entry name" value="Nucleic acid-binding proteins"/>
    <property type="match status" value="1"/>
</dbReference>
<dbReference type="HAMAP" id="MF_00075">
    <property type="entry name" value="IF_1"/>
    <property type="match status" value="1"/>
</dbReference>
<dbReference type="InterPro" id="IPR012340">
    <property type="entry name" value="NA-bd_OB-fold"/>
</dbReference>
<dbReference type="InterPro" id="IPR006196">
    <property type="entry name" value="RNA-binding_domain_S1_IF1"/>
</dbReference>
<dbReference type="InterPro" id="IPR003029">
    <property type="entry name" value="S1_domain"/>
</dbReference>
<dbReference type="InterPro" id="IPR004368">
    <property type="entry name" value="TIF_IF1"/>
</dbReference>
<dbReference type="NCBIfam" id="TIGR00008">
    <property type="entry name" value="infA"/>
    <property type="match status" value="1"/>
</dbReference>
<dbReference type="PANTHER" id="PTHR33370">
    <property type="entry name" value="TRANSLATION INITIATION FACTOR IF-1, CHLOROPLASTIC"/>
    <property type="match status" value="1"/>
</dbReference>
<dbReference type="PANTHER" id="PTHR33370:SF1">
    <property type="entry name" value="TRANSLATION INITIATION FACTOR IF-1, CHLOROPLASTIC"/>
    <property type="match status" value="1"/>
</dbReference>
<dbReference type="Pfam" id="PF01176">
    <property type="entry name" value="eIF-1a"/>
    <property type="match status" value="1"/>
</dbReference>
<dbReference type="SMART" id="SM00316">
    <property type="entry name" value="S1"/>
    <property type="match status" value="1"/>
</dbReference>
<dbReference type="SUPFAM" id="SSF50249">
    <property type="entry name" value="Nucleic acid-binding proteins"/>
    <property type="match status" value="1"/>
</dbReference>
<dbReference type="PROSITE" id="PS50832">
    <property type="entry name" value="S1_IF1_TYPE"/>
    <property type="match status" value="1"/>
</dbReference>
<keyword id="KW-0963">Cytoplasm</keyword>
<keyword id="KW-0396">Initiation factor</keyword>
<keyword id="KW-0648">Protein biosynthesis</keyword>
<keyword id="KW-0694">RNA-binding</keyword>
<keyword id="KW-0699">rRNA-binding</keyword>
<organism>
    <name type="scientific">Dehalococcoides mccartyi (strain CBDB1)</name>
    <dbReference type="NCBI Taxonomy" id="255470"/>
    <lineage>
        <taxon>Bacteria</taxon>
        <taxon>Bacillati</taxon>
        <taxon>Chloroflexota</taxon>
        <taxon>Dehalococcoidia</taxon>
        <taxon>Dehalococcoidales</taxon>
        <taxon>Dehalococcoidaceae</taxon>
        <taxon>Dehalococcoides</taxon>
    </lineage>
</organism>